<keyword id="KW-0025">Alternative splicing</keyword>
<keyword id="KW-1048">Host nucleus</keyword>
<keyword id="KW-0472">Membrane</keyword>
<keyword id="KW-0694">RNA-binding</keyword>
<keyword id="KW-0468">Viral matrix protein</keyword>
<keyword id="KW-0946">Virion</keyword>
<sequence>MSLLTEVETYVLSIIPSGPLKAEIAQRLEDVFAGKNTDLEVLMEWLKTRPILSPLTKGILGFVFTLTVPSERGLQRRRFVQNALNGNGDPNNMDKAVKLYRKLKREITFHGAKEISLSYSAGALASCMGLIYNRMGAVTTEVAFGLVCATCEQIADSQHRSHRQMVTTTNPLIRHENRMVLASTTAKAMEQMAGSSEQAAEAMEVASQARQMVQAMRTIGTHPSSSAGLKNDLLENLQAYQKRMGVQMQRFK</sequence>
<accession>B4URD8</accession>
<name>M1_I06A0</name>
<evidence type="ECO:0000255" key="1">
    <source>
        <dbReference type="HAMAP-Rule" id="MF_04068"/>
    </source>
</evidence>
<proteinExistence type="inferred from homology"/>
<organism>
    <name type="scientific">Influenza A virus (strain A/Russia:St.Petersburg/8/2006 H1N1)</name>
    <dbReference type="NCBI Taxonomy" id="518998"/>
    <lineage>
        <taxon>Viruses</taxon>
        <taxon>Riboviria</taxon>
        <taxon>Orthornavirae</taxon>
        <taxon>Negarnaviricota</taxon>
        <taxon>Polyploviricotina</taxon>
        <taxon>Insthoviricetes</taxon>
        <taxon>Articulavirales</taxon>
        <taxon>Orthomyxoviridae</taxon>
        <taxon>Alphainfluenzavirus</taxon>
        <taxon>Alphainfluenzavirus influenzae</taxon>
        <taxon>Influenza A virus</taxon>
    </lineage>
</organism>
<protein>
    <recommendedName>
        <fullName evidence="1">Matrix protein 1</fullName>
        <shortName evidence="1">M1</shortName>
    </recommendedName>
</protein>
<feature type="chain" id="PRO_0000372900" description="Matrix protein 1">
    <location>
        <begin position="1"/>
        <end position="252"/>
    </location>
</feature>
<feature type="region of interest" description="Membrane-binding" evidence="1">
    <location>
        <begin position="1"/>
        <end position="164"/>
    </location>
</feature>
<feature type="region of interest" description="RNP-binding" evidence="1">
    <location>
        <begin position="165"/>
        <end position="252"/>
    </location>
</feature>
<feature type="short sequence motif" description="Nuclear localization signal" evidence="1">
    <location>
        <begin position="101"/>
        <end position="105"/>
    </location>
</feature>
<organismHost>
    <name type="scientific">Aves</name>
    <dbReference type="NCBI Taxonomy" id="8782"/>
</organismHost>
<organismHost>
    <name type="scientific">Homo sapiens</name>
    <name type="common">Human</name>
    <dbReference type="NCBI Taxonomy" id="9606"/>
</organismHost>
<organismHost>
    <name type="scientific">Sus scrofa</name>
    <name type="common">Pig</name>
    <dbReference type="NCBI Taxonomy" id="9823"/>
</organismHost>
<gene>
    <name evidence="1" type="primary">M</name>
</gene>
<reference key="1">
    <citation type="submission" date="2008-07" db="EMBL/GenBank/DDBJ databases">
        <title>The NIAID influenza genome sequencing project.</title>
        <authorList>
            <person name="Spiro D."/>
            <person name="Halpin R."/>
            <person name="Boyne A."/>
            <person name="Bera J."/>
            <person name="Ghedin E."/>
            <person name="Hostetler J."/>
            <person name="Fedorova N."/>
            <person name="Hine E."/>
            <person name="Overton L."/>
            <person name="Djuric K."/>
            <person name="Sarmiento M."/>
            <person name="Sitz J."/>
            <person name="Katzel D."/>
            <person name="Manojkumar R."/>
            <person name="Devis R."/>
            <person name="Fulvini A."/>
            <person name="Silverman J."/>
            <person name="Le J."/>
            <person name="Kilbourne E.D."/>
            <person name="Pokorny B."/>
            <person name="Bucher D."/>
            <person name="Orff E."/>
            <person name="Minieri J."/>
            <person name="Onodera S."/>
            <person name="Huang L."/>
            <person name="Bao Y."/>
            <person name="Sanders R."/>
            <person name="Dernovoy D."/>
            <person name="Kiryutin B."/>
            <person name="Lipman D.J."/>
            <person name="Tatusova T."/>
        </authorList>
    </citation>
    <scope>NUCLEOTIDE SEQUENCE [GENOMIC RNA]</scope>
</reference>
<reference key="2">
    <citation type="submission" date="2008-07" db="EMBL/GenBank/DDBJ databases">
        <authorList>
            <consortium name="The NIAID Influenza Genome Sequencing Consortium"/>
        </authorList>
    </citation>
    <scope>NUCLEOTIDE SEQUENCE [GENOMIC RNA]</scope>
</reference>
<comment type="function">
    <text evidence="1">Plays critical roles in virus replication, from virus entry and uncoating to assembly and budding of the virus particle. M1 binding to ribonucleocapsids (RNPs) in nucleus seems to inhibit viral transcription. Interaction of viral NEP with M1-RNP is thought to promote nuclear export of the complex, which is targeted to the virion assembly site at the apical plasma membrane in polarized epithelial cells. Interactions with NA and HA may bring M1, a non-raft-associated protein, into lipid rafts. Forms a continuous shell on the inner side of the lipid bilayer in virion, where it binds the RNP. During virus entry into cell, the M2 ion channel acidifies the internal virion core, inducing M1 dissociation from the RNP. M1-free RNPs are transported to the nucleus, where viral transcription and replication can take place.</text>
</comment>
<comment type="function">
    <text evidence="1">Determines the virion's shape: spherical or filamentous. Clinical isolates of influenza are characterized by the presence of significant proportion of filamentous virions, whereas after multiple passage on eggs or cell culture, virions have only spherical morphology. Filamentous virions are thought to be important to infect neighboring cells, and spherical virions more suited to spread through aerosol between hosts organisms.</text>
</comment>
<comment type="subunit">
    <text evidence="1">Homodimer and homomultimer. Interacts with NEP. Binds ribonucleocapsid by both interacting with genomic RNA and NP protein. May interact with HA and NA. Cannot bind NP without genomic RNA.</text>
</comment>
<comment type="subcellular location">
    <subcellularLocation>
        <location evidence="1">Virion membrane</location>
        <topology evidence="1">Peripheral membrane protein</topology>
        <orientation evidence="1">Cytoplasmic side</orientation>
    </subcellularLocation>
    <subcellularLocation>
        <location evidence="1">Host nucleus</location>
    </subcellularLocation>
</comment>
<comment type="alternative products">
    <event type="alternative splicing"/>
    <isoform>
        <id>B4URD8-1</id>
        <name>M1</name>
        <sequence type="displayed"/>
    </isoform>
    <isoform>
        <id>B4URD7-1</id>
        <name>M2</name>
        <sequence type="external"/>
    </isoform>
    <text>Only the first 9 residues are shared by the 2 isoforms.</text>
</comment>
<comment type="miscellaneous">
    <text evidence="1">Most abundant protein in virion. When expressed alone can form virus-like particles in transfected cells.</text>
</comment>
<comment type="similarity">
    <text evidence="1">Belongs to the influenza viruses Matrix protein M1 family.</text>
</comment>
<dbReference type="EMBL" id="CY034125">
    <property type="protein sequence ID" value="ACF54588.1"/>
    <property type="molecule type" value="Viral_cRNA"/>
</dbReference>
<dbReference type="SMR" id="B4URD8"/>
<dbReference type="Proteomes" id="UP000008081">
    <property type="component" value="Genome"/>
</dbReference>
<dbReference type="GO" id="GO:0042025">
    <property type="term" value="C:host cell nucleus"/>
    <property type="evidence" value="ECO:0007669"/>
    <property type="project" value="UniProtKB-SubCell"/>
</dbReference>
<dbReference type="GO" id="GO:0016020">
    <property type="term" value="C:membrane"/>
    <property type="evidence" value="ECO:0007669"/>
    <property type="project" value="UniProtKB-KW"/>
</dbReference>
<dbReference type="GO" id="GO:0055036">
    <property type="term" value="C:virion membrane"/>
    <property type="evidence" value="ECO:0007669"/>
    <property type="project" value="UniProtKB-SubCell"/>
</dbReference>
<dbReference type="GO" id="GO:0003723">
    <property type="term" value="F:RNA binding"/>
    <property type="evidence" value="ECO:0007669"/>
    <property type="project" value="UniProtKB-UniRule"/>
</dbReference>
<dbReference type="GO" id="GO:0039660">
    <property type="term" value="F:structural constituent of virion"/>
    <property type="evidence" value="ECO:0007669"/>
    <property type="project" value="UniProtKB-UniRule"/>
</dbReference>
<dbReference type="GO" id="GO:0046761">
    <property type="term" value="P:viral budding from plasma membrane"/>
    <property type="evidence" value="ECO:0007669"/>
    <property type="project" value="UniProtKB-UniRule"/>
</dbReference>
<dbReference type="FunFam" id="1.10.10.180:FF:000001">
    <property type="entry name" value="Matrix protein 1"/>
    <property type="match status" value="1"/>
</dbReference>
<dbReference type="FunFam" id="1.20.91.10:FF:000001">
    <property type="entry name" value="Matrix protein 1"/>
    <property type="match status" value="1"/>
</dbReference>
<dbReference type="Gene3D" id="1.10.10.180">
    <property type="match status" value="1"/>
</dbReference>
<dbReference type="Gene3D" id="1.20.91.10">
    <property type="match status" value="1"/>
</dbReference>
<dbReference type="HAMAP" id="MF_04068">
    <property type="entry name" value="INFV_M1"/>
    <property type="match status" value="1"/>
</dbReference>
<dbReference type="InterPro" id="IPR036039">
    <property type="entry name" value="Flu_matrix_M1"/>
</dbReference>
<dbReference type="InterPro" id="IPR013188">
    <property type="entry name" value="Flu_matrix_M1_C"/>
</dbReference>
<dbReference type="InterPro" id="IPR001561">
    <property type="entry name" value="Flu_matrix_M1_N"/>
</dbReference>
<dbReference type="InterPro" id="IPR015423">
    <property type="entry name" value="Flu_matrix_M1_N_sub1"/>
</dbReference>
<dbReference type="InterPro" id="IPR015799">
    <property type="entry name" value="Flu_matrix_M1_N_sub2"/>
</dbReference>
<dbReference type="InterPro" id="IPR037533">
    <property type="entry name" value="INFV_M1"/>
</dbReference>
<dbReference type="Pfam" id="PF00598">
    <property type="entry name" value="Flu_M1"/>
    <property type="match status" value="1"/>
</dbReference>
<dbReference type="Pfam" id="PF08289">
    <property type="entry name" value="Flu_M1_C"/>
    <property type="match status" value="1"/>
</dbReference>
<dbReference type="SMART" id="SM00759">
    <property type="entry name" value="Flu_M1_C"/>
    <property type="match status" value="1"/>
</dbReference>
<dbReference type="SUPFAM" id="SSF48145">
    <property type="entry name" value="Influenza virus matrix protein M1"/>
    <property type="match status" value="1"/>
</dbReference>